<name>YY1_ARATH</name>
<dbReference type="EMBL" id="AB073162">
    <property type="protein sequence ID" value="BAB83613.1"/>
    <property type="status" value="ALT_SEQ"/>
    <property type="molecule type" value="Genomic_DNA"/>
</dbReference>
<dbReference type="EMBL" id="CP002687">
    <property type="protein sequence ID" value="AEE82553.1"/>
    <property type="molecule type" value="Genomic_DNA"/>
</dbReference>
<dbReference type="EMBL" id="CP002687">
    <property type="protein sequence ID" value="AEE82554.1"/>
    <property type="molecule type" value="Genomic_DNA"/>
</dbReference>
<dbReference type="RefSeq" id="NP_001031589.1">
    <molecule id="Q2V3L3-2"/>
    <property type="nucleotide sequence ID" value="NM_001036512.2"/>
</dbReference>
<dbReference type="RefSeq" id="NP_849323.1">
    <molecule id="Q2V3L3-1"/>
    <property type="nucleotide sequence ID" value="NM_178992.4"/>
</dbReference>
<dbReference type="SMR" id="Q2V3L3"/>
<dbReference type="BioGRID" id="11401">
    <property type="interactions" value="5"/>
</dbReference>
<dbReference type="FunCoup" id="Q2V3L3">
    <property type="interactions" value="1545"/>
</dbReference>
<dbReference type="IntAct" id="Q2V3L3">
    <property type="interactions" value="4"/>
</dbReference>
<dbReference type="STRING" id="3702.Q2V3L3"/>
<dbReference type="iPTMnet" id="Q2V3L3"/>
<dbReference type="PaxDb" id="3702-AT4G06634.1"/>
<dbReference type="ProteomicsDB" id="242960">
    <molecule id="Q2V3L3-1"/>
</dbReference>
<dbReference type="EnsemblPlants" id="AT4G06634.1">
    <molecule id="Q2V3L3-1"/>
    <property type="protein sequence ID" value="AT4G06634.1"/>
    <property type="gene ID" value="AT4G06634"/>
</dbReference>
<dbReference type="EnsemblPlants" id="AT4G06634.2">
    <molecule id="Q2V3L3-2"/>
    <property type="protein sequence ID" value="AT4G06634.2"/>
    <property type="gene ID" value="AT4G06634"/>
</dbReference>
<dbReference type="GeneID" id="826093"/>
<dbReference type="Gramene" id="AT4G06634.1">
    <molecule id="Q2V3L3-1"/>
    <property type="protein sequence ID" value="AT4G06634.1"/>
    <property type="gene ID" value="AT4G06634"/>
</dbReference>
<dbReference type="Gramene" id="AT4G06634.2">
    <molecule id="Q2V3L3-2"/>
    <property type="protein sequence ID" value="AT4G06634.2"/>
    <property type="gene ID" value="AT4G06634"/>
</dbReference>
<dbReference type="KEGG" id="ath:AT4G06634"/>
<dbReference type="Araport" id="AT4G06634"/>
<dbReference type="TAIR" id="AT4G06634">
    <property type="gene designation" value="YY1"/>
</dbReference>
<dbReference type="eggNOG" id="KOG1721">
    <property type="taxonomic scope" value="Eukaryota"/>
</dbReference>
<dbReference type="HOGENOM" id="CLU_040248_0_0_1"/>
<dbReference type="InParanoid" id="Q2V3L3"/>
<dbReference type="OMA" id="IAVQHAP"/>
<dbReference type="OrthoDB" id="3437960at2759"/>
<dbReference type="PhylomeDB" id="Q2V3L3"/>
<dbReference type="PRO" id="PR:Q2V3L3"/>
<dbReference type="Proteomes" id="UP000006548">
    <property type="component" value="Chromosome 4"/>
</dbReference>
<dbReference type="ExpressionAtlas" id="Q2V3L3">
    <property type="expression patterns" value="baseline and differential"/>
</dbReference>
<dbReference type="GO" id="GO:0031011">
    <property type="term" value="C:Ino80 complex"/>
    <property type="evidence" value="ECO:0000314"/>
    <property type="project" value="TAIR"/>
</dbReference>
<dbReference type="GO" id="GO:0005634">
    <property type="term" value="C:nucleus"/>
    <property type="evidence" value="ECO:0000314"/>
    <property type="project" value="UniProtKB"/>
</dbReference>
<dbReference type="GO" id="GO:0043565">
    <property type="term" value="F:sequence-specific DNA binding"/>
    <property type="evidence" value="ECO:0000314"/>
    <property type="project" value="TAIR"/>
</dbReference>
<dbReference type="GO" id="GO:0008270">
    <property type="term" value="F:zinc ion binding"/>
    <property type="evidence" value="ECO:0007669"/>
    <property type="project" value="UniProtKB-KW"/>
</dbReference>
<dbReference type="GO" id="GO:0009738">
    <property type="term" value="P:abscisic acid-activated signaling pathway"/>
    <property type="evidence" value="ECO:0007669"/>
    <property type="project" value="UniProtKB-KW"/>
</dbReference>
<dbReference type="GO" id="GO:0006952">
    <property type="term" value="P:defense response"/>
    <property type="evidence" value="ECO:0007669"/>
    <property type="project" value="UniProtKB-KW"/>
</dbReference>
<dbReference type="GO" id="GO:0009788">
    <property type="term" value="P:negative regulation of abscisic acid-activated signaling pathway"/>
    <property type="evidence" value="ECO:0000315"/>
    <property type="project" value="UniProtKB"/>
</dbReference>
<dbReference type="GO" id="GO:0045892">
    <property type="term" value="P:negative regulation of DNA-templated transcription"/>
    <property type="evidence" value="ECO:0000314"/>
    <property type="project" value="TAIR"/>
</dbReference>
<dbReference type="GO" id="GO:0045893">
    <property type="term" value="P:positive regulation of DNA-templated transcription"/>
    <property type="evidence" value="ECO:0000314"/>
    <property type="project" value="TAIR"/>
</dbReference>
<dbReference type="GO" id="GO:1900150">
    <property type="term" value="P:regulation of defense response to fungus"/>
    <property type="evidence" value="ECO:0000315"/>
    <property type="project" value="UniProtKB"/>
</dbReference>
<dbReference type="GO" id="GO:0006355">
    <property type="term" value="P:regulation of DNA-templated transcription"/>
    <property type="evidence" value="ECO:0000315"/>
    <property type="project" value="UniProtKB"/>
</dbReference>
<dbReference type="GO" id="GO:1901000">
    <property type="term" value="P:regulation of response to salt stress"/>
    <property type="evidence" value="ECO:0000315"/>
    <property type="project" value="UniProtKB"/>
</dbReference>
<dbReference type="GO" id="GO:0009737">
    <property type="term" value="P:response to abscisic acid"/>
    <property type="evidence" value="ECO:0000270"/>
    <property type="project" value="UniProtKB"/>
</dbReference>
<dbReference type="GO" id="GO:0009646">
    <property type="term" value="P:response to absence of light"/>
    <property type="evidence" value="ECO:0000270"/>
    <property type="project" value="UniProtKB"/>
</dbReference>
<dbReference type="GO" id="GO:0009416">
    <property type="term" value="P:response to light stimulus"/>
    <property type="evidence" value="ECO:0000270"/>
    <property type="project" value="UniProtKB"/>
</dbReference>
<dbReference type="GO" id="GO:0006970">
    <property type="term" value="P:response to osmotic stress"/>
    <property type="evidence" value="ECO:0000270"/>
    <property type="project" value="UniProtKB"/>
</dbReference>
<dbReference type="GO" id="GO:0009651">
    <property type="term" value="P:response to salt stress"/>
    <property type="evidence" value="ECO:0000270"/>
    <property type="project" value="UniProtKB"/>
</dbReference>
<dbReference type="GO" id="GO:0009414">
    <property type="term" value="P:response to water deprivation"/>
    <property type="evidence" value="ECO:0000270"/>
    <property type="project" value="UniProtKB"/>
</dbReference>
<dbReference type="FunFam" id="3.30.160.60:FF:000071">
    <property type="entry name" value="Putative zinc finger protein 143"/>
    <property type="match status" value="1"/>
</dbReference>
<dbReference type="FunFam" id="3.30.160.60:FF:000221">
    <property type="entry name" value="Zinc finger protein 410"/>
    <property type="match status" value="1"/>
</dbReference>
<dbReference type="FunFam" id="3.30.160.60:FF:002205">
    <property type="entry name" value="Zinc finger transcription factor YY1"/>
    <property type="match status" value="1"/>
</dbReference>
<dbReference type="Gene3D" id="3.30.160.60">
    <property type="entry name" value="Classic Zinc Finger"/>
    <property type="match status" value="5"/>
</dbReference>
<dbReference type="InterPro" id="IPR036236">
    <property type="entry name" value="Znf_C2H2_sf"/>
</dbReference>
<dbReference type="InterPro" id="IPR013087">
    <property type="entry name" value="Znf_C2H2_type"/>
</dbReference>
<dbReference type="PANTHER" id="PTHR14003">
    <property type="entry name" value="TRANSCRIPTIONAL REPRESSOR PROTEIN YY"/>
    <property type="match status" value="1"/>
</dbReference>
<dbReference type="PANTHER" id="PTHR14003:SF1">
    <property type="entry name" value="ZINC FINGER TRANSCRIPTION FACTOR YY1"/>
    <property type="match status" value="1"/>
</dbReference>
<dbReference type="Pfam" id="PF00096">
    <property type="entry name" value="zf-C2H2"/>
    <property type="match status" value="2"/>
</dbReference>
<dbReference type="SMART" id="SM00355">
    <property type="entry name" value="ZnF_C2H2"/>
    <property type="match status" value="5"/>
</dbReference>
<dbReference type="SUPFAM" id="SSF57667">
    <property type="entry name" value="beta-beta-alpha zinc fingers"/>
    <property type="match status" value="3"/>
</dbReference>
<dbReference type="PROSITE" id="PS00028">
    <property type="entry name" value="ZINC_FINGER_C2H2_1"/>
    <property type="match status" value="5"/>
</dbReference>
<dbReference type="PROSITE" id="PS50157">
    <property type="entry name" value="ZINC_FINGER_C2H2_2"/>
    <property type="match status" value="4"/>
</dbReference>
<evidence type="ECO:0000255" key="1"/>
<evidence type="ECO:0000255" key="2">
    <source>
        <dbReference type="PROSITE-ProRule" id="PRU00042"/>
    </source>
</evidence>
<evidence type="ECO:0000255" key="3">
    <source>
        <dbReference type="PROSITE-ProRule" id="PRU00768"/>
    </source>
</evidence>
<evidence type="ECO:0000256" key="4">
    <source>
        <dbReference type="SAM" id="MobiDB-lite"/>
    </source>
</evidence>
<evidence type="ECO:0000269" key="5">
    <source>
    </source>
</evidence>
<evidence type="ECO:0000269" key="6">
    <source>
    </source>
</evidence>
<evidence type="ECO:0000269" key="7">
    <source>
    </source>
</evidence>
<evidence type="ECO:0000303" key="8">
    <source>
    </source>
</evidence>
<evidence type="ECO:0000305" key="9"/>
<evidence type="ECO:0000312" key="10">
    <source>
        <dbReference type="Araport" id="AT4G06634"/>
    </source>
</evidence>
<evidence type="ECO:0007744" key="11">
    <source>
    </source>
</evidence>
<feature type="chain" id="PRO_0000305942" description="Zinc finger transcription factor YY1">
    <location>
        <begin position="1"/>
        <end position="387"/>
    </location>
</feature>
<feature type="zinc finger region" description="C2H2-type 1" evidence="2">
    <location>
        <begin position="79"/>
        <end position="103"/>
    </location>
</feature>
<feature type="zinc finger region" description="C2H2-type 2" evidence="2">
    <location>
        <begin position="108"/>
        <end position="132"/>
    </location>
</feature>
<feature type="zinc finger region" description="C2H2-type 3" evidence="2">
    <location>
        <begin position="138"/>
        <end position="162"/>
    </location>
</feature>
<feature type="zinc finger region" description="C2H2-type 4" evidence="2">
    <location>
        <begin position="168"/>
        <end position="193"/>
    </location>
</feature>
<feature type="zinc finger region" description="C2H2-type 5" evidence="2">
    <location>
        <begin position="230"/>
        <end position="255"/>
    </location>
</feature>
<feature type="region of interest" description="MED18-binding" evidence="6">
    <location>
        <begin position="201"/>
        <end position="290"/>
    </location>
</feature>
<feature type="region of interest" description="Disordered" evidence="4">
    <location>
        <begin position="258"/>
        <end position="387"/>
    </location>
</feature>
<feature type="coiled-coil region" evidence="1">
    <location>
        <begin position="339"/>
        <end position="367"/>
    </location>
</feature>
<feature type="short sequence motif" description="Nuclear localization signal" evidence="3">
    <location>
        <begin position="319"/>
        <end position="326"/>
    </location>
</feature>
<feature type="compositionally biased region" description="Basic residues" evidence="4">
    <location>
        <begin position="291"/>
        <end position="305"/>
    </location>
</feature>
<feature type="compositionally biased region" description="Acidic residues" evidence="4">
    <location>
        <begin position="344"/>
        <end position="363"/>
    </location>
</feature>
<feature type="compositionally biased region" description="Acidic residues" evidence="4">
    <location>
        <begin position="373"/>
        <end position="387"/>
    </location>
</feature>
<feature type="modified residue" description="Phosphoserine" evidence="11">
    <location>
        <position position="284"/>
    </location>
</feature>
<feature type="splice variant" id="VSP_028387" description="In isoform 2." evidence="9">
    <location>
        <begin position="1"/>
        <end position="38"/>
    </location>
</feature>
<feature type="splice variant" id="VSP_028388" description="In isoform 2." evidence="9">
    <original>TGGKCHLHKWVT</original>
    <variation>MLNCIIVLLLLP</variation>
    <location>
        <begin position="39"/>
        <end position="50"/>
    </location>
</feature>
<comment type="function">
    <text evidence="5 6 7">Dual-function transcription factor with both repression and activation activities. Binds to 5'-CCATATT-3' motif in target gene promoters (e.g. ABR1) (PubMed:26961720). Also binds to G-rich DNA motif 5'-GGGGGCAGTGG-3' (PubMed:22508367). Regulates the expression of genes involved in diverse cellular pathways, including glucose metabolism, photosynthesis, phototropism and stress response (e.g. salt, drought and osmotic stress) (PubMed:22508367, PubMed:26961720). Regulates plant immunity, especially during necrotrophic fungal infection (e.g. B.cinerea) (PubMed:24451981). Binds to ABR1 promoter and promotes its expression, thus negatively regulating the abscisic acid (ABA) signaling pathway. Represses ABA- and salt-responsive genes expression (PubMed:26961720).</text>
</comment>
<comment type="subunit">
    <text evidence="6">Interacts with MED18 to suppress disease susceptibility via the repression of genes glutaredoxins GRX480, GRXS13 and thioredoxin TRX-h5.</text>
</comment>
<comment type="subcellular location">
    <subcellularLocation>
        <location evidence="6 7">Nucleus</location>
    </subcellularLocation>
</comment>
<comment type="alternative products">
    <event type="alternative splicing"/>
    <isoform>
        <id>Q2V3L3-1</id>
        <name>1</name>
        <sequence type="displayed"/>
    </isoform>
    <isoform>
        <id>Q2V3L3-2</id>
        <name>2</name>
        <sequence type="described" ref="VSP_028387 VSP_028388"/>
    </isoform>
</comment>
<comment type="tissue specificity">
    <text evidence="7">Mostly expressed in flowers, to a lower extent in seedlings, stems and leaves, and, at low levels, in roots and senescent leaves.</text>
</comment>
<comment type="developmental stage">
    <text evidence="7">Rapidly induced following seed germination, especially in tender cotyledons.</text>
</comment>
<comment type="induction">
    <text evidence="7">Induced by abscisic acid (ABA) in an ABI1- and ABI4-dependent manner. Stimulated by stress conditions including high salt, osmotic stress (e.g. mannitol) and dehydration. May be induced by ABI4 but repressed by ABR1. Repressed by darkness but induced by light.</text>
</comment>
<comment type="disruption phenotype">
    <text evidence="6 7">Deregulated expression of glutaredoxins GRX480, GRXS13 and thioredoxin TRX-h5 leading to enhanced susceptibility to fungal infection (e.g. B.cinerea) (PubMed:24451981). Increased sensitivity to abscisic acid (ABA), drought, and salt (NaCl) stress. Reduced induction of ABR1, but reduced repression of RD29A, RD29B, and COR15A in response to abiotic stresses (PubMed:26961720).</text>
</comment>
<comment type="sequence caution" evidence="9">
    <conflict type="erroneous gene model prediction">
        <sequence resource="EMBL-CDS" id="BAB83613"/>
    </conflict>
</comment>
<proteinExistence type="evidence at protein level"/>
<gene>
    <name evidence="8" type="primary">YY1</name>
    <name evidence="10" type="ordered locus">At4g06634</name>
    <name evidence="9" type="ORF">F8H12</name>
</gene>
<sequence length="387" mass="44703">MDHQNYQYQNPFERRPILKSKAPAVKWIKEWVPQDIVATGGKCHLHKWVTEDTFSRLKEKEKEPDVPEPEPEPTTEILFLCSYDGCGKTFFDVSALRKHSHIHGERQYVCDQEGCGKKFLDSSKLKRHYLIHTGERNYICTYEGCGKAFSLDFNLRSHMKTHSQENYHICPYSGCVKRYAHEYKLKNHVAAYHEKNGGGETPKYTPPAEKVLRTVKTPATVCGPSSDRPYACPYEGCEKAYIHEYKLKLHLKREHPGHLQEENADTPTLNKHNGNDRNEIDDGSDQDVYRKHASNGKGQTHKQQSRAKPNMRTPPAKVGKKGSTSSPAKARIAKKPWQAKETFEEVEREEEEDSEETEEDRDNVEDGWRFGENNEDDDDDEETEYED</sequence>
<organism>
    <name type="scientific">Arabidopsis thaliana</name>
    <name type="common">Mouse-ear cress</name>
    <dbReference type="NCBI Taxonomy" id="3702"/>
    <lineage>
        <taxon>Eukaryota</taxon>
        <taxon>Viridiplantae</taxon>
        <taxon>Streptophyta</taxon>
        <taxon>Embryophyta</taxon>
        <taxon>Tracheophyta</taxon>
        <taxon>Spermatophyta</taxon>
        <taxon>Magnoliopsida</taxon>
        <taxon>eudicotyledons</taxon>
        <taxon>Gunneridae</taxon>
        <taxon>Pentapetalae</taxon>
        <taxon>rosids</taxon>
        <taxon>malvids</taxon>
        <taxon>Brassicales</taxon>
        <taxon>Brassicaceae</taxon>
        <taxon>Camelineae</taxon>
        <taxon>Arabidopsis</taxon>
    </lineage>
</organism>
<reference key="1">
    <citation type="journal article" date="2001" name="DNA Res.">
        <title>The size and sequence organization of the centromeric region of Arabidopsis thaliana chromosome 4.</title>
        <authorList>
            <person name="Kumekawa N."/>
            <person name="Hosouchi T."/>
            <person name="Tsuruoka H."/>
            <person name="Kotani H."/>
        </authorList>
    </citation>
    <scope>NUCLEOTIDE SEQUENCE [LARGE SCALE GENOMIC DNA]</scope>
    <source>
        <strain>cv. Columbia</strain>
    </source>
</reference>
<reference key="2">
    <citation type="journal article" date="2017" name="Plant J.">
        <title>Araport11: a complete reannotation of the Arabidopsis thaliana reference genome.</title>
        <authorList>
            <person name="Cheng C.Y."/>
            <person name="Krishnakumar V."/>
            <person name="Chan A.P."/>
            <person name="Thibaud-Nissen F."/>
            <person name="Schobel S."/>
            <person name="Town C.D."/>
        </authorList>
    </citation>
    <scope>GENOME REANNOTATION</scope>
    <source>
        <strain>cv. Columbia</strain>
    </source>
</reference>
<reference key="3">
    <citation type="journal article" date="2009" name="Plant Physiol.">
        <title>Large-scale Arabidopsis phosphoproteome profiling reveals novel chloroplast kinase substrates and phosphorylation networks.</title>
        <authorList>
            <person name="Reiland S."/>
            <person name="Messerli G."/>
            <person name="Baerenfaller K."/>
            <person name="Gerrits B."/>
            <person name="Endler A."/>
            <person name="Grossmann J."/>
            <person name="Gruissem W."/>
            <person name="Baginsky S."/>
        </authorList>
    </citation>
    <scope>PHOSPHORYLATION [LARGE SCALE ANALYSIS] AT SER-284</scope>
    <scope>IDENTIFICATION BY MASS SPECTROMETRY [LARGE SCALE ANALYSIS]</scope>
</reference>
<reference key="4">
    <citation type="journal article" date="2012" name="Acta Biochim. Biophys. Sin.">
        <title>In vitro identification of DNA-binding motif for the new zinc finger protein AtYY1.</title>
        <authorList>
            <person name="Wu X."/>
            <person name="Cheng Y."/>
            <person name="Li T."/>
            <person name="Wang Z."/>
            <person name="Liu J.-Y."/>
        </authorList>
    </citation>
    <scope>FUNCTION</scope>
</reference>
<reference key="5">
    <citation type="journal article" date="2014" name="Nat. Commun.">
        <title>MED18 interaction with distinct transcription factors regulates multiple plant functions.</title>
        <authorList>
            <person name="Lai Z."/>
            <person name="Schluttenhofer C.M."/>
            <person name="Bhide K."/>
            <person name="Shreve J."/>
            <person name="Thimmapuram J."/>
            <person name="Lee S.Y."/>
            <person name="Yun D.-J."/>
            <person name="Mengiste T."/>
        </authorList>
    </citation>
    <scope>FUNCTION</scope>
    <scope>DISRUPTION PHENOTYPE</scope>
    <scope>INTERACTION WITH MED18</scope>
    <scope>SUBCELLULAR LOCATION</scope>
    <source>
        <strain>cv. Columbia</strain>
    </source>
</reference>
<reference key="6">
    <citation type="journal article" date="2016" name="Mol. Plant">
        <title>A dual-function transcription factor, AtYY1, is a novel negative regulator of the Arabidopsis ABA response network.</title>
        <authorList>
            <person name="Li T."/>
            <person name="Wu X.-Y."/>
            <person name="Li H."/>
            <person name="Song J.-H."/>
            <person name="Liu J.-Y."/>
        </authorList>
    </citation>
    <scope>FUNCTION</scope>
    <scope>DISRUPTION PHENOTYPE</scope>
    <scope>INDUCTION BY LIGHT; ABSCISIC ACID; OSMOTIC STRESS; HIGH SALT AND DEHYDRATION</scope>
    <scope>SUBCELLULAR LOCATION</scope>
    <scope>TISSUE SPECIFICITY</scope>
    <scope>DEVELOPMENTAL STAGE</scope>
    <source>
        <strain>cv. Columbia</strain>
    </source>
</reference>
<accession>Q2V3L3</accession>
<accession>Q27GJ7</accession>
<accession>Q8W3M5</accession>
<protein>
    <recommendedName>
        <fullName evidence="8">Zinc finger transcription factor YY1</fullName>
    </recommendedName>
    <alternativeName>
        <fullName evidence="8">Protein YIN YANG 1</fullName>
        <shortName evidence="8">AtYY1</shortName>
    </alternativeName>
</protein>
<keyword id="KW-0938">Abscisic acid signaling pathway</keyword>
<keyword id="KW-0010">Activator</keyword>
<keyword id="KW-0025">Alternative splicing</keyword>
<keyword id="KW-0175">Coiled coil</keyword>
<keyword id="KW-0238">DNA-binding</keyword>
<keyword id="KW-0479">Metal-binding</keyword>
<keyword id="KW-0539">Nucleus</keyword>
<keyword id="KW-0597">Phosphoprotein</keyword>
<keyword id="KW-0611">Plant defense</keyword>
<keyword id="KW-1185">Reference proteome</keyword>
<keyword id="KW-0677">Repeat</keyword>
<keyword id="KW-0678">Repressor</keyword>
<keyword id="KW-0346">Stress response</keyword>
<keyword id="KW-0804">Transcription</keyword>
<keyword id="KW-0805">Transcription regulation</keyword>
<keyword id="KW-0862">Zinc</keyword>
<keyword id="KW-0863">Zinc-finger</keyword>